<proteinExistence type="evidence at transcript level"/>
<keyword id="KW-0217">Developmental protein</keyword>
<keyword id="KW-0221">Differentiation</keyword>
<keyword id="KW-0238">DNA-binding</keyword>
<keyword id="KW-0371">Homeobox</keyword>
<keyword id="KW-0524">Neurogenesis</keyword>
<keyword id="KW-0539">Nucleus</keyword>
<keyword id="KW-1185">Reference proteome</keyword>
<keyword id="KW-0804">Transcription</keyword>
<keyword id="KW-0805">Transcription regulation</keyword>
<reference key="1">
    <citation type="journal article" date="2000" name="Development">
        <title>The paired homeobox gene Uncx4.1 specifies pedicles, transverse processes and proximal ribs of the vertebral column.</title>
        <authorList>
            <person name="Leitges M."/>
            <person name="Neidhardt L."/>
            <person name="Haenig B."/>
            <person name="Herrmann B.G."/>
            <person name="Kispert A."/>
        </authorList>
    </citation>
    <scope>NUCLEOTIDE SEQUENCE [MRNA]</scope>
    <scope>FUNCTION</scope>
    <scope>DISRUPTION PHENOTYPE</scope>
</reference>
<reference key="2">
    <citation type="submission" date="2000-03" db="EMBL/GenBank/DDBJ databases">
        <title>Cloning and expression of the mouse homolog of Caenorhabditis elegans unc4 gene.</title>
        <authorList>
            <person name="Nicholson L.F.B."/>
            <person name="Ma L."/>
            <person name="Goulding M."/>
        </authorList>
    </citation>
    <scope>NUCLEOTIDE SEQUENCE [MRNA]</scope>
    <source>
        <tissue>Spinal cord</tissue>
    </source>
</reference>
<reference key="3">
    <citation type="journal article" date="2004" name="Genome Res.">
        <title>The status, quality, and expansion of the NIH full-length cDNA project: the Mammalian Gene Collection (MGC).</title>
        <authorList>
            <consortium name="The MGC Project Team"/>
        </authorList>
    </citation>
    <scope>NUCLEOTIDE SEQUENCE [LARGE SCALE MRNA]</scope>
    <source>
        <strain>C57BL/6J</strain>
        <tissue>Brain</tissue>
    </source>
</reference>
<reference key="4">
    <citation type="journal article" date="1997" name="Dev. Dyn.">
        <title>Paired-related murine homeobox gene expressed in the developing sclerotome, kidney, and nervous system.</title>
        <authorList>
            <person name="Mansouri A."/>
            <person name="Yokota Y."/>
            <person name="Wehr R."/>
            <person name="Copeland N.G."/>
            <person name="Jenkins N.A."/>
            <person name="Gruss P."/>
        </authorList>
    </citation>
    <scope>NUCLEOTIDE SEQUENCE [MRNA] OF 1-387</scope>
    <scope>TISSUE SPECIFICITY</scope>
    <scope>DEVELOPMENTAL STAGE</scope>
    <source>
        <strain>C57BL/6J</strain>
    </source>
</reference>
<reference key="5">
    <citation type="journal article" date="1996" name="Proc. Natl. Acad. Sci. U.S.A.">
        <title>Cloning and characterization of four murine homeobox genes.</title>
        <authorList>
            <person name="Rovescalli A.C."/>
            <person name="Asoh S."/>
            <person name="Nirenberg M.W."/>
        </authorList>
    </citation>
    <scope>NUCLEOTIDE SEQUENCE [GENOMIC DNA] OF 109-304</scope>
</reference>
<reference key="6">
    <citation type="journal article" date="1999" name="Curr. Biol.">
        <title>Interaction between Notch signalling and Lunatic fringe during somite boundary formation in the mouse.</title>
        <authorList>
            <person name="del Barco Barrantes I."/>
            <person name="Elia A.J."/>
            <person name="Wuensch K."/>
            <person name="De Angelis M.H."/>
            <person name="Mak T.W."/>
            <person name="Rossant J."/>
            <person name="Conlon R.A."/>
            <person name="Gossler A."/>
            <person name="de la Pompa J.L."/>
        </authorList>
    </citation>
    <scope>TISSUE SPECIFICITY</scope>
</reference>
<reference key="7">
    <citation type="journal article" date="1999" name="Dev. Biol.">
        <title>Adhesive subdivisions intrinsic to the epithelial somites.</title>
        <authorList>
            <person name="Horikawa K."/>
            <person name="Radice G."/>
            <person name="Takeichi M."/>
            <person name="Chisaka O."/>
        </authorList>
    </citation>
    <scope>TISSUE SPECIFICITY</scope>
</reference>
<reference key="8">
    <citation type="journal article" date="2000" name="Development">
        <title>Uncx4.1 is required for the formation of the pedicles and proximal ribs and acts upstream of Pax9.</title>
        <authorList>
            <person name="Mansouri A."/>
            <person name="Voss A.K."/>
            <person name="Thomas T."/>
            <person name="Yokota Y."/>
            <person name="Gruss P."/>
        </authorList>
    </citation>
    <scope>FUNCTION</scope>
    <scope>DISRUPTION PHENOTYPE</scope>
</reference>
<reference key="9">
    <citation type="journal article" date="2001" name="Dev. Dyn.">
        <title>Early mesodermal phenotypes in splotch suggest a role for Pax3 in the formation of epithelial somites.</title>
        <authorList>
            <person name="Schubert F.R."/>
            <person name="Tremblay P."/>
            <person name="Mansouri A."/>
            <person name="Faisst A.M."/>
            <person name="Kammandel B."/>
            <person name="Lumsden A."/>
            <person name="Gruss P."/>
            <person name="Dietrich S."/>
        </authorList>
    </citation>
    <scope>TISSUE SPECIFICITY</scope>
</reference>
<reference key="10">
    <citation type="journal article" date="2002" name="Development">
        <title>Hypomorphic Mesp allele distinguishes establishment of rostrocaudal polarity and segment border formation in somitogenesis.</title>
        <authorList>
            <person name="Nomura-Kitabayashi A."/>
            <person name="Takahashi Y."/>
            <person name="Kitajima S."/>
            <person name="Inoue T."/>
            <person name="Takeda H."/>
            <person name="Saga Y."/>
        </authorList>
    </citation>
    <scope>TISSUE SPECIFICITY</scope>
</reference>
<reference key="11">
    <citation type="journal article" date="2006" name="Development">
        <title>Identification of Epha4 enhancer required for segmental expression and the regulation by Mesp2.</title>
        <authorList>
            <person name="Nakajima Y."/>
            <person name="Morimoto M."/>
            <person name="Takahashi Y."/>
            <person name="Koseki H."/>
            <person name="Saga Y."/>
        </authorList>
    </citation>
    <scope>TISSUE SPECIFICITY</scope>
</reference>
<reference key="12">
    <citation type="journal article" date="2006" name="J. Mol. Endocrinol.">
        <title>Neurohypophysial dysmorphogenesis in mice lacking the homeobox gene Uncx4.1.</title>
        <authorList>
            <person name="Asbreuk C.H.J."/>
            <person name="van Doorninck J.H."/>
            <person name="Mansouri A."/>
            <person name="Smidt M.P."/>
            <person name="Burbach J.P.H."/>
        </authorList>
    </citation>
    <scope>FUNCTION</scope>
    <scope>DISRUPTION PHENOTYPE</scope>
    <scope>TISSUE SPECIFICITY</scope>
</reference>
<reference key="13">
    <citation type="journal article" date="2007" name="Dev. Dyn.">
        <title>Transcription factors Mesp2 and Paraxis have critical roles in axial musculoskeletal formation.</title>
        <authorList>
            <person name="Takahashi Y."/>
            <person name="Takagi A."/>
            <person name="Hiraoka S."/>
            <person name="Koseki H."/>
            <person name="Kanno J."/>
            <person name="Rawls A."/>
            <person name="Saga Y."/>
        </authorList>
    </citation>
    <scope>TISSUE SPECIFICITY</scope>
</reference>
<reference key="14">
    <citation type="journal article" date="2007" name="FEBS Lett.">
        <title>Ripply2 is essential for precise somite formation during mouse early development.</title>
        <authorList>
            <person name="Chan T."/>
            <person name="Kondow A."/>
            <person name="Hosoya A."/>
            <person name="Hitachi K."/>
            <person name="Yukita A."/>
            <person name="Okabayashi K."/>
            <person name="Nakamura H."/>
            <person name="Ozawa H."/>
            <person name="Kiyonari H."/>
            <person name="Michiue T."/>
            <person name="Ito Y."/>
            <person name="Asashima M."/>
        </authorList>
    </citation>
    <scope>TISSUE SPECIFICITY</scope>
</reference>
<feature type="chain" id="PRO_0000334625" description="Homeobox protein unc-4 homolog">
    <location>
        <begin position="1"/>
        <end position="530"/>
    </location>
</feature>
<feature type="DNA-binding region" description="Homeobox" evidence="1">
    <location>
        <begin position="109"/>
        <end position="168"/>
    </location>
</feature>
<feature type="region of interest" description="Disordered" evidence="2">
    <location>
        <begin position="90"/>
        <end position="111"/>
    </location>
</feature>
<feature type="region of interest" description="Disordered" evidence="2">
    <location>
        <begin position="165"/>
        <end position="360"/>
    </location>
</feature>
<feature type="region of interest" description="Disordered" evidence="2">
    <location>
        <begin position="400"/>
        <end position="530"/>
    </location>
</feature>
<feature type="compositionally biased region" description="Basic and acidic residues" evidence="2">
    <location>
        <begin position="195"/>
        <end position="205"/>
    </location>
</feature>
<feature type="compositionally biased region" description="Basic residues" evidence="2">
    <location>
        <begin position="206"/>
        <end position="224"/>
    </location>
</feature>
<feature type="compositionally biased region" description="Low complexity" evidence="2">
    <location>
        <begin position="230"/>
        <end position="240"/>
    </location>
</feature>
<feature type="compositionally biased region" description="Pro residues" evidence="2">
    <location>
        <begin position="248"/>
        <end position="257"/>
    </location>
</feature>
<feature type="compositionally biased region" description="Pro residues" evidence="2">
    <location>
        <begin position="275"/>
        <end position="284"/>
    </location>
</feature>
<feature type="compositionally biased region" description="Pro residues" evidence="2">
    <location>
        <begin position="407"/>
        <end position="419"/>
    </location>
</feature>
<feature type="compositionally biased region" description="Low complexity" evidence="2">
    <location>
        <begin position="433"/>
        <end position="448"/>
    </location>
</feature>
<feature type="compositionally biased region" description="Low complexity" evidence="2">
    <location>
        <begin position="462"/>
        <end position="474"/>
    </location>
</feature>
<feature type="compositionally biased region" description="Pro residues" evidence="2">
    <location>
        <begin position="482"/>
        <end position="504"/>
    </location>
</feature>
<feature type="sequence conflict" description="In Ref. 5; AAC52830." evidence="14" ref="5">
    <original>A</original>
    <variation>D</variation>
    <location>
        <position position="260"/>
    </location>
</feature>
<comment type="function">
    <text evidence="5 6 9">Transcription factor involved in somitogenesis and neurogenesis. Required for the maintenance and differentiation of particular elements of the axial skeleton. May act upstream of PAX9. Plays a role in controlling the development of connections of hypothalamic neurons to pituitary elements, allowing central neurons to reach the peripheral blood circulation and to deliver hormones for control of peripheral functions.</text>
</comment>
<comment type="subcellular location">
    <subcellularLocation>
        <location evidence="1">Nucleus</location>
    </subcellularLocation>
</comment>
<comment type="tissue specificity">
    <text evidence="3 4 7 8 9 10 11 12 13">Expressed in the paraxial mesoderm, in the developing kidney and central nervous system. In the somite, it is restricted to the caudal half of the newly formed somite and sclerotome. In the central nervous system, it is detected in the developing spinal cord, hindbrain, mesencephalon and telencephalon. Expressed in adult and embryonic magnocellular neurons of the hypothalamo-neurohypophysial system.</text>
</comment>
<comment type="disruption phenotype">
    <text evidence="5 6 9">Mice die perinatally and exhibit severe malformations of the axial skeleton. Pedicles of the neural arches and proximal ribs are not formed. In addition, dorsal root ganglia are disorganized. In the hypothalamo-neurohypophysial system, neurons are viable and able to express neuropeptides; however, the connectivity of magnocellular neurons with posterior pituitary elements is compromised.</text>
</comment>
<comment type="miscellaneous">
    <text>Marker of antero-posterior subdivisions of the somite.</text>
</comment>
<comment type="similarity">
    <text evidence="14">Belongs to the paired homeobox family. Unc-4 subfamily.</text>
</comment>
<organism>
    <name type="scientific">Mus musculus</name>
    <name type="common">Mouse</name>
    <dbReference type="NCBI Taxonomy" id="10090"/>
    <lineage>
        <taxon>Eukaryota</taxon>
        <taxon>Metazoa</taxon>
        <taxon>Chordata</taxon>
        <taxon>Craniata</taxon>
        <taxon>Vertebrata</taxon>
        <taxon>Euteleostomi</taxon>
        <taxon>Mammalia</taxon>
        <taxon>Eutheria</taxon>
        <taxon>Euarchontoglires</taxon>
        <taxon>Glires</taxon>
        <taxon>Rodentia</taxon>
        <taxon>Myomorpha</taxon>
        <taxon>Muroidea</taxon>
        <taxon>Muridae</taxon>
        <taxon>Murinae</taxon>
        <taxon>Mus</taxon>
        <taxon>Mus</taxon>
    </lineage>
</organism>
<protein>
    <recommendedName>
        <fullName>Homeobox protein unc-4 homolog</fullName>
    </recommendedName>
    <alternativeName>
        <fullName>Homeobox protein Uncx4.1</fullName>
    </alternativeName>
</protein>
<gene>
    <name type="primary">Uncx</name>
    <name type="synonym">Uncx4.1</name>
</gene>
<evidence type="ECO:0000255" key="1">
    <source>
        <dbReference type="PROSITE-ProRule" id="PRU00108"/>
    </source>
</evidence>
<evidence type="ECO:0000256" key="2">
    <source>
        <dbReference type="SAM" id="MobiDB-lite"/>
    </source>
</evidence>
<evidence type="ECO:0000269" key="3">
    <source>
    </source>
</evidence>
<evidence type="ECO:0000269" key="4">
    <source>
    </source>
</evidence>
<evidence type="ECO:0000269" key="5">
    <source>
    </source>
</evidence>
<evidence type="ECO:0000269" key="6">
    <source>
    </source>
</evidence>
<evidence type="ECO:0000269" key="7">
    <source>
    </source>
</evidence>
<evidence type="ECO:0000269" key="8">
    <source>
    </source>
</evidence>
<evidence type="ECO:0000269" key="9">
    <source>
    </source>
</evidence>
<evidence type="ECO:0000269" key="10">
    <source>
    </source>
</evidence>
<evidence type="ECO:0000269" key="11">
    <source>
    </source>
</evidence>
<evidence type="ECO:0000269" key="12">
    <source>
    </source>
</evidence>
<evidence type="ECO:0000269" key="13">
    <source>
    </source>
</evidence>
<evidence type="ECO:0000305" key="14"/>
<sequence>MMDGRLLEHPHAQFGGSLGGVVGFPYPLGHHHVYELAGHQLQSAAAAAAAASVPFSIDGLLSGSCAAAAASVVNPTPLLPAACGVAGESQPFKLADSGDPDKESPGCKRRRTRTNFTGWQLEELEKAFNESHYPDVFMREALALRLDLVESRVQVWFQNRRAKWRKKENTKKGPGRPAHNSHPTTCSGEPMDPEEIARKELEKMEKKKRKHEKKLLKSQSRHLHSPGGLSLHSAPSSDSDSGGGGLSPEPPEPPPPTAAAKGPGAHGSGIAGSAPVPPGEPPAPGTCDPAFYPSQRSGAGSQPRLGRPADKDTVPCGPGAAATAGLPKASPFSVESLLSDSPPRRKATPANAAATAGLDFTPGLPCAPRTLIGKGHFLLYPITQPLGFLVPQAALKGGAGPELVPKDAPPAPPAPPAPPAQASFGTFPGPGGAADPAFARRSPEVVASPGPPAPASFRDLTAAAAESGAGDCADVGTVCPAASPPPPLETSPGPGPRAPSPPGEPATCGAAEPGAATGPSPPEGEEVDMD</sequence>
<dbReference type="EMBL" id="AJ001116">
    <property type="protein sequence ID" value="CAA04542.1"/>
    <property type="molecule type" value="mRNA"/>
</dbReference>
<dbReference type="EMBL" id="AF247550">
    <property type="protein sequence ID" value="AAF71322.1"/>
    <property type="molecule type" value="mRNA"/>
</dbReference>
<dbReference type="EMBL" id="BC051973">
    <property type="protein sequence ID" value="AAH51973.1"/>
    <property type="molecule type" value="mRNA"/>
</dbReference>
<dbReference type="EMBL" id="Z96107">
    <property type="protein sequence ID" value="CAB09537.1"/>
    <property type="molecule type" value="mRNA"/>
</dbReference>
<dbReference type="EMBL" id="AH006754">
    <property type="protein sequence ID" value="AAC52830.1"/>
    <property type="molecule type" value="Genomic_DNA"/>
</dbReference>
<dbReference type="CCDS" id="CCDS19813.1"/>
<dbReference type="RefSeq" id="NP_038730.1">
    <property type="nucleotide sequence ID" value="NM_013702.4"/>
</dbReference>
<dbReference type="FunCoup" id="O08934">
    <property type="interactions" value="102"/>
</dbReference>
<dbReference type="STRING" id="10090.ENSMUSP00000134067"/>
<dbReference type="GlyGen" id="O08934">
    <property type="glycosylation" value="1 site"/>
</dbReference>
<dbReference type="PhosphoSitePlus" id="O08934"/>
<dbReference type="PaxDb" id="10090-ENSMUSP00000031523"/>
<dbReference type="ProteomicsDB" id="298199"/>
<dbReference type="Antibodypedia" id="24186">
    <property type="antibodies" value="128 antibodies from 22 providers"/>
</dbReference>
<dbReference type="DNASU" id="22255"/>
<dbReference type="Ensembl" id="ENSMUST00000172997.3">
    <property type="protein sequence ID" value="ENSMUSP00000134067.3"/>
    <property type="gene ID" value="ENSMUSG00000029546.13"/>
</dbReference>
<dbReference type="GeneID" id="22255"/>
<dbReference type="KEGG" id="mmu:22255"/>
<dbReference type="UCSC" id="uc009agv.1">
    <property type="organism name" value="mouse"/>
</dbReference>
<dbReference type="AGR" id="MGI:108013"/>
<dbReference type="CTD" id="340260"/>
<dbReference type="MGI" id="MGI:108013">
    <property type="gene designation" value="Uncx"/>
</dbReference>
<dbReference type="VEuPathDB" id="HostDB:ENSMUSG00000029546"/>
<dbReference type="eggNOG" id="KOG0490">
    <property type="taxonomic scope" value="Eukaryota"/>
</dbReference>
<dbReference type="GeneTree" id="ENSGT00940000161420"/>
<dbReference type="HOGENOM" id="CLU_041996_0_0_1"/>
<dbReference type="InParanoid" id="O08934"/>
<dbReference type="OMA" id="ALKAAPC"/>
<dbReference type="OrthoDB" id="6159439at2759"/>
<dbReference type="PhylomeDB" id="O08934"/>
<dbReference type="TreeFam" id="TF315554"/>
<dbReference type="BioGRID-ORCS" id="22255">
    <property type="hits" value="1 hit in 78 CRISPR screens"/>
</dbReference>
<dbReference type="ChiTaRS" id="Uncx">
    <property type="organism name" value="mouse"/>
</dbReference>
<dbReference type="PRO" id="PR:O08934"/>
<dbReference type="Proteomes" id="UP000000589">
    <property type="component" value="Chromosome 5"/>
</dbReference>
<dbReference type="RNAct" id="O08934">
    <property type="molecule type" value="protein"/>
</dbReference>
<dbReference type="Bgee" id="ENSMUSG00000029546">
    <property type="expression patterns" value="Expressed in olfactory epithelium and 86 other cell types or tissues"/>
</dbReference>
<dbReference type="ExpressionAtlas" id="O08934">
    <property type="expression patterns" value="baseline and differential"/>
</dbReference>
<dbReference type="GO" id="GO:0005634">
    <property type="term" value="C:nucleus"/>
    <property type="evidence" value="ECO:0007669"/>
    <property type="project" value="UniProtKB-SubCell"/>
</dbReference>
<dbReference type="GO" id="GO:0000981">
    <property type="term" value="F:DNA-binding transcription factor activity, RNA polymerase II-specific"/>
    <property type="evidence" value="ECO:0007669"/>
    <property type="project" value="InterPro"/>
</dbReference>
<dbReference type="GO" id="GO:1990837">
    <property type="term" value="F:sequence-specific double-stranded DNA binding"/>
    <property type="evidence" value="ECO:0007669"/>
    <property type="project" value="Ensembl"/>
</dbReference>
<dbReference type="GO" id="GO:0001502">
    <property type="term" value="P:cartilage condensation"/>
    <property type="evidence" value="ECO:0000315"/>
    <property type="project" value="MGI"/>
</dbReference>
<dbReference type="GO" id="GO:0035726">
    <property type="term" value="P:common myeloid progenitor cell proliferation"/>
    <property type="evidence" value="ECO:0000315"/>
    <property type="project" value="MGI"/>
</dbReference>
<dbReference type="GO" id="GO:0021516">
    <property type="term" value="P:dorsal spinal cord development"/>
    <property type="evidence" value="ECO:0000315"/>
    <property type="project" value="MGI"/>
</dbReference>
<dbReference type="GO" id="GO:0021889">
    <property type="term" value="P:olfactory bulb interneuron differentiation"/>
    <property type="evidence" value="ECO:0000315"/>
    <property type="project" value="MGI"/>
</dbReference>
<dbReference type="GO" id="GO:0007389">
    <property type="term" value="P:pattern specification process"/>
    <property type="evidence" value="ECO:0000315"/>
    <property type="project" value="MGI"/>
</dbReference>
<dbReference type="GO" id="GO:0045595">
    <property type="term" value="P:regulation of cell differentiation"/>
    <property type="evidence" value="ECO:0000315"/>
    <property type="project" value="MGI"/>
</dbReference>
<dbReference type="GO" id="GO:0010468">
    <property type="term" value="P:regulation of gene expression"/>
    <property type="evidence" value="ECO:0000315"/>
    <property type="project" value="MGI"/>
</dbReference>
<dbReference type="CDD" id="cd00086">
    <property type="entry name" value="homeodomain"/>
    <property type="match status" value="1"/>
</dbReference>
<dbReference type="FunFam" id="1.10.10.60:FF:000057">
    <property type="entry name" value="Short stature homeobox 2"/>
    <property type="match status" value="1"/>
</dbReference>
<dbReference type="Gene3D" id="1.10.10.60">
    <property type="entry name" value="Homeodomain-like"/>
    <property type="match status" value="1"/>
</dbReference>
<dbReference type="InterPro" id="IPR001356">
    <property type="entry name" value="HD"/>
</dbReference>
<dbReference type="InterPro" id="IPR017970">
    <property type="entry name" value="Homeobox_CS"/>
</dbReference>
<dbReference type="InterPro" id="IPR009057">
    <property type="entry name" value="Homeodomain-like_sf"/>
</dbReference>
<dbReference type="PANTHER" id="PTHR46799">
    <property type="entry name" value="HOMEOBOX PROTEIN UNC-4 HOMOLOG"/>
    <property type="match status" value="1"/>
</dbReference>
<dbReference type="PANTHER" id="PTHR46799:SF1">
    <property type="entry name" value="HOMEOBOX PROTEIN UNC-4 HOMOLOG"/>
    <property type="match status" value="1"/>
</dbReference>
<dbReference type="Pfam" id="PF00046">
    <property type="entry name" value="Homeodomain"/>
    <property type="match status" value="1"/>
</dbReference>
<dbReference type="SMART" id="SM00389">
    <property type="entry name" value="HOX"/>
    <property type="match status" value="1"/>
</dbReference>
<dbReference type="SUPFAM" id="SSF46689">
    <property type="entry name" value="Homeodomain-like"/>
    <property type="match status" value="1"/>
</dbReference>
<dbReference type="PROSITE" id="PS00027">
    <property type="entry name" value="HOMEOBOX_1"/>
    <property type="match status" value="1"/>
</dbReference>
<dbReference type="PROSITE" id="PS50071">
    <property type="entry name" value="HOMEOBOX_2"/>
    <property type="match status" value="1"/>
</dbReference>
<name>UNC4_MOUSE</name>
<accession>O08934</accession>
<accession>P70457</accession>
<accession>Q78DU3</accession>